<reference key="1">
    <citation type="journal article" date="2001" name="Nature">
        <title>Complete genome sequence of a multiple drug resistant Salmonella enterica serovar Typhi CT18.</title>
        <authorList>
            <person name="Parkhill J."/>
            <person name="Dougan G."/>
            <person name="James K.D."/>
            <person name="Thomson N.R."/>
            <person name="Pickard D."/>
            <person name="Wain J."/>
            <person name="Churcher C.M."/>
            <person name="Mungall K.L."/>
            <person name="Bentley S.D."/>
            <person name="Holden M.T.G."/>
            <person name="Sebaihia M."/>
            <person name="Baker S."/>
            <person name="Basham D."/>
            <person name="Brooks K."/>
            <person name="Chillingworth T."/>
            <person name="Connerton P."/>
            <person name="Cronin A."/>
            <person name="Davis P."/>
            <person name="Davies R.M."/>
            <person name="Dowd L."/>
            <person name="White N."/>
            <person name="Farrar J."/>
            <person name="Feltwell T."/>
            <person name="Hamlin N."/>
            <person name="Haque A."/>
            <person name="Hien T.T."/>
            <person name="Holroyd S."/>
            <person name="Jagels K."/>
            <person name="Krogh A."/>
            <person name="Larsen T.S."/>
            <person name="Leather S."/>
            <person name="Moule S."/>
            <person name="O'Gaora P."/>
            <person name="Parry C."/>
            <person name="Quail M.A."/>
            <person name="Rutherford K.M."/>
            <person name="Simmonds M."/>
            <person name="Skelton J."/>
            <person name="Stevens K."/>
            <person name="Whitehead S."/>
            <person name="Barrell B.G."/>
        </authorList>
    </citation>
    <scope>NUCLEOTIDE SEQUENCE [LARGE SCALE GENOMIC DNA]</scope>
    <source>
        <strain>CT18</strain>
    </source>
</reference>
<reference key="2">
    <citation type="journal article" date="2003" name="J. Bacteriol.">
        <title>Comparative genomics of Salmonella enterica serovar Typhi strains Ty2 and CT18.</title>
        <authorList>
            <person name="Deng W."/>
            <person name="Liou S.-R."/>
            <person name="Plunkett G. III"/>
            <person name="Mayhew G.F."/>
            <person name="Rose D.J."/>
            <person name="Burland V."/>
            <person name="Kodoyianni V."/>
            <person name="Schwartz D.C."/>
            <person name="Blattner F.R."/>
        </authorList>
    </citation>
    <scope>NUCLEOTIDE SEQUENCE [LARGE SCALE GENOMIC DNA]</scope>
    <source>
        <strain>ATCC 700931 / Ty2</strain>
    </source>
</reference>
<proteinExistence type="inferred from homology"/>
<sequence>MINPNPKRSDEPVFWGLFGAGGMWGAIIAPVIVLLVGIMLPLGLFPGDALSFERVLTFAQSFIGRVFLFLMIVLPLWCGLHRMHHAMHDLKIHVPAGKWVFYGLAAILTVVTAIGVITL</sequence>
<evidence type="ECO:0000255" key="1">
    <source>
        <dbReference type="HAMAP-Rule" id="MF_00709"/>
    </source>
</evidence>
<gene>
    <name evidence="1" type="primary">frdD</name>
    <name type="ordered locus">STY4700</name>
    <name type="ordered locus">t4392</name>
</gene>
<keyword id="KW-0997">Cell inner membrane</keyword>
<keyword id="KW-1003">Cell membrane</keyword>
<keyword id="KW-0472">Membrane</keyword>
<keyword id="KW-0812">Transmembrane</keyword>
<keyword id="KW-1133">Transmembrane helix</keyword>
<protein>
    <recommendedName>
        <fullName evidence="1">Fumarate reductase subunit D</fullName>
    </recommendedName>
    <alternativeName>
        <fullName evidence="1">Fumarate reductase 13 kDa hydrophobic protein</fullName>
    </alternativeName>
    <alternativeName>
        <fullName evidence="1">Quinol-fumarate reductase subunit D</fullName>
        <shortName evidence="1">QFR subunit D</shortName>
    </alternativeName>
</protein>
<feature type="chain" id="PRO_0000196551" description="Fumarate reductase subunit D">
    <location>
        <begin position="1"/>
        <end position="119"/>
    </location>
</feature>
<feature type="transmembrane region" description="Helical" evidence="1">
    <location>
        <begin position="25"/>
        <end position="45"/>
    </location>
</feature>
<feature type="transmembrane region" description="Helical" evidence="1">
    <location>
        <begin position="61"/>
        <end position="81"/>
    </location>
</feature>
<feature type="transmembrane region" description="Helical" evidence="1">
    <location>
        <begin position="99"/>
        <end position="119"/>
    </location>
</feature>
<accession>P67646</accession>
<accession>Q8XFK9</accession>
<name>FRDD_SALTI</name>
<dbReference type="EMBL" id="AL513382">
    <property type="protein sequence ID" value="CAD06820.1"/>
    <property type="molecule type" value="Genomic_DNA"/>
</dbReference>
<dbReference type="EMBL" id="AE014613">
    <property type="protein sequence ID" value="AAO71843.1"/>
    <property type="molecule type" value="Genomic_DNA"/>
</dbReference>
<dbReference type="RefSeq" id="NP_458779.1">
    <property type="nucleotide sequence ID" value="NC_003198.1"/>
</dbReference>
<dbReference type="RefSeq" id="WP_000609650.1">
    <property type="nucleotide sequence ID" value="NZ_WSUR01000012.1"/>
</dbReference>
<dbReference type="SMR" id="P67646"/>
<dbReference type="STRING" id="220341.gene:17588518"/>
<dbReference type="KEGG" id="stt:t4392"/>
<dbReference type="KEGG" id="sty:STY4700"/>
<dbReference type="PATRIC" id="fig|220341.7.peg.4801"/>
<dbReference type="eggNOG" id="COG3080">
    <property type="taxonomic scope" value="Bacteria"/>
</dbReference>
<dbReference type="HOGENOM" id="CLU_168367_0_0_6"/>
<dbReference type="OMA" id="ACYAFAG"/>
<dbReference type="OrthoDB" id="9804636at2"/>
<dbReference type="Proteomes" id="UP000000541">
    <property type="component" value="Chromosome"/>
</dbReference>
<dbReference type="Proteomes" id="UP000002670">
    <property type="component" value="Chromosome"/>
</dbReference>
<dbReference type="GO" id="GO:0045283">
    <property type="term" value="C:fumarate reductase complex"/>
    <property type="evidence" value="ECO:0007669"/>
    <property type="project" value="UniProtKB-UniRule"/>
</dbReference>
<dbReference type="GO" id="GO:0005886">
    <property type="term" value="C:plasma membrane"/>
    <property type="evidence" value="ECO:0007669"/>
    <property type="project" value="UniProtKB-SubCell"/>
</dbReference>
<dbReference type="GO" id="GO:0000104">
    <property type="term" value="F:succinate dehydrogenase activity"/>
    <property type="evidence" value="ECO:0007669"/>
    <property type="project" value="UniProtKB-UniRule"/>
</dbReference>
<dbReference type="GO" id="GO:0006106">
    <property type="term" value="P:fumarate metabolic process"/>
    <property type="evidence" value="ECO:0007669"/>
    <property type="project" value="InterPro"/>
</dbReference>
<dbReference type="CDD" id="cd00547">
    <property type="entry name" value="QFR_TypeD_subunitD"/>
    <property type="match status" value="1"/>
</dbReference>
<dbReference type="FunFam" id="1.20.1300.10:FF:000002">
    <property type="entry name" value="Fumarate reductase subunit D"/>
    <property type="match status" value="1"/>
</dbReference>
<dbReference type="Gene3D" id="1.20.1300.10">
    <property type="entry name" value="Fumarate reductase/succinate dehydrogenase, transmembrane subunit"/>
    <property type="match status" value="1"/>
</dbReference>
<dbReference type="HAMAP" id="MF_00709">
    <property type="entry name" value="Fumarate_red_D"/>
    <property type="match status" value="1"/>
</dbReference>
<dbReference type="InterPro" id="IPR003418">
    <property type="entry name" value="Fumarate_red_D"/>
</dbReference>
<dbReference type="InterPro" id="IPR034804">
    <property type="entry name" value="SQR/QFR_C/D"/>
</dbReference>
<dbReference type="NCBIfam" id="NF003977">
    <property type="entry name" value="PRK05470.1-1"/>
    <property type="match status" value="1"/>
</dbReference>
<dbReference type="Pfam" id="PF02313">
    <property type="entry name" value="Fumarate_red_D"/>
    <property type="match status" value="1"/>
</dbReference>
<dbReference type="PIRSF" id="PIRSF000179">
    <property type="entry name" value="FrdD"/>
    <property type="match status" value="1"/>
</dbReference>
<dbReference type="SUPFAM" id="SSF81343">
    <property type="entry name" value="Fumarate reductase respiratory complex transmembrane subunits"/>
    <property type="match status" value="1"/>
</dbReference>
<comment type="function">
    <text evidence="1">Two distinct, membrane-bound, FAD-containing enzymes are responsible for the catalysis of fumarate and succinate interconversion; fumarate reductase is used in anaerobic growth, and succinate dehydrogenase is used in aerobic growth. Anchors the catalytic components of the fumarate reductase complex to the cell inner membrane, binds quinones.</text>
</comment>
<comment type="subunit">
    <text evidence="1">Part of an enzyme complex containing four subunits: a flavoprotein (FrdA), an iron-sulfur protein (FrdB), and two hydrophobic anchor proteins (FrdC and FrdD).</text>
</comment>
<comment type="subcellular location">
    <subcellularLocation>
        <location evidence="1">Cell inner membrane</location>
        <topology evidence="1">Multi-pass membrane protein</topology>
    </subcellularLocation>
</comment>
<comment type="similarity">
    <text evidence="1">Belongs to the FrdD family.</text>
</comment>
<organism>
    <name type="scientific">Salmonella typhi</name>
    <dbReference type="NCBI Taxonomy" id="90370"/>
    <lineage>
        <taxon>Bacteria</taxon>
        <taxon>Pseudomonadati</taxon>
        <taxon>Pseudomonadota</taxon>
        <taxon>Gammaproteobacteria</taxon>
        <taxon>Enterobacterales</taxon>
        <taxon>Enterobacteriaceae</taxon>
        <taxon>Salmonella</taxon>
    </lineage>
</organism>